<dbReference type="EC" id="1.4.3.5" evidence="1"/>
<dbReference type="EMBL" id="CP000086">
    <property type="protein sequence ID" value="ABC36690.1"/>
    <property type="status" value="ALT_INIT"/>
    <property type="molecule type" value="Genomic_DNA"/>
</dbReference>
<dbReference type="RefSeq" id="WP_009892695.1">
    <property type="nucleotide sequence ID" value="NZ_CP008785.1"/>
</dbReference>
<dbReference type="SMR" id="Q2T0M6"/>
<dbReference type="GeneID" id="45120473"/>
<dbReference type="KEGG" id="bte:BTH_I0717"/>
<dbReference type="HOGENOM" id="CLU_032263_2_2_4"/>
<dbReference type="UniPathway" id="UPA01068">
    <property type="reaction ID" value="UER00304"/>
</dbReference>
<dbReference type="UniPathway" id="UPA01068">
    <property type="reaction ID" value="UER00305"/>
</dbReference>
<dbReference type="Proteomes" id="UP000001930">
    <property type="component" value="Chromosome I"/>
</dbReference>
<dbReference type="GO" id="GO:0010181">
    <property type="term" value="F:FMN binding"/>
    <property type="evidence" value="ECO:0007669"/>
    <property type="project" value="UniProtKB-UniRule"/>
</dbReference>
<dbReference type="GO" id="GO:0004733">
    <property type="term" value="F:pyridoxamine phosphate oxidase activity"/>
    <property type="evidence" value="ECO:0007669"/>
    <property type="project" value="UniProtKB-UniRule"/>
</dbReference>
<dbReference type="GO" id="GO:0008615">
    <property type="term" value="P:pyridoxine biosynthetic process"/>
    <property type="evidence" value="ECO:0007669"/>
    <property type="project" value="UniProtKB-KW"/>
</dbReference>
<dbReference type="FunFam" id="2.30.110.10:FF:000005">
    <property type="entry name" value="NAD(P)H-hydrate epimerase"/>
    <property type="match status" value="1"/>
</dbReference>
<dbReference type="Gene3D" id="2.30.110.10">
    <property type="entry name" value="Electron Transport, Fmn-binding Protein, Chain A"/>
    <property type="match status" value="1"/>
</dbReference>
<dbReference type="HAMAP" id="MF_01629">
    <property type="entry name" value="PdxH"/>
    <property type="match status" value="1"/>
</dbReference>
<dbReference type="InterPro" id="IPR000659">
    <property type="entry name" value="Pyridox_Oxase"/>
</dbReference>
<dbReference type="InterPro" id="IPR019740">
    <property type="entry name" value="Pyridox_Oxase_CS"/>
</dbReference>
<dbReference type="InterPro" id="IPR011576">
    <property type="entry name" value="Pyridox_Oxase_N"/>
</dbReference>
<dbReference type="InterPro" id="IPR019576">
    <property type="entry name" value="Pyridoxamine_oxidase_dimer_C"/>
</dbReference>
<dbReference type="InterPro" id="IPR012349">
    <property type="entry name" value="Split_barrel_FMN-bd"/>
</dbReference>
<dbReference type="NCBIfam" id="TIGR00558">
    <property type="entry name" value="pdxH"/>
    <property type="match status" value="1"/>
</dbReference>
<dbReference type="NCBIfam" id="NF004231">
    <property type="entry name" value="PRK05679.1"/>
    <property type="match status" value="1"/>
</dbReference>
<dbReference type="PANTHER" id="PTHR10851:SF0">
    <property type="entry name" value="PYRIDOXINE-5'-PHOSPHATE OXIDASE"/>
    <property type="match status" value="1"/>
</dbReference>
<dbReference type="PANTHER" id="PTHR10851">
    <property type="entry name" value="PYRIDOXINE-5-PHOSPHATE OXIDASE"/>
    <property type="match status" value="1"/>
</dbReference>
<dbReference type="Pfam" id="PF10590">
    <property type="entry name" value="PNP_phzG_C"/>
    <property type="match status" value="1"/>
</dbReference>
<dbReference type="Pfam" id="PF01243">
    <property type="entry name" value="PNPOx_N"/>
    <property type="match status" value="1"/>
</dbReference>
<dbReference type="PIRSF" id="PIRSF000190">
    <property type="entry name" value="Pyd_amn-ph_oxd"/>
    <property type="match status" value="1"/>
</dbReference>
<dbReference type="SUPFAM" id="SSF50475">
    <property type="entry name" value="FMN-binding split barrel"/>
    <property type="match status" value="1"/>
</dbReference>
<dbReference type="PROSITE" id="PS01064">
    <property type="entry name" value="PYRIDOX_OXIDASE"/>
    <property type="match status" value="1"/>
</dbReference>
<protein>
    <recommendedName>
        <fullName evidence="1">Pyridoxine/pyridoxamine 5'-phosphate oxidase</fullName>
        <ecNumber evidence="1">1.4.3.5</ecNumber>
    </recommendedName>
    <alternativeName>
        <fullName evidence="1">PNP/PMP oxidase</fullName>
        <shortName evidence="1">PNPOx</shortName>
    </alternativeName>
    <alternativeName>
        <fullName evidence="1">Pyridoxal 5'-phosphate synthase</fullName>
    </alternativeName>
</protein>
<comment type="function">
    <text evidence="1">Catalyzes the oxidation of either pyridoxine 5'-phosphate (PNP) or pyridoxamine 5'-phosphate (PMP) into pyridoxal 5'-phosphate (PLP).</text>
</comment>
<comment type="catalytic activity">
    <reaction evidence="1">
        <text>pyridoxamine 5'-phosphate + O2 + H2O = pyridoxal 5'-phosphate + H2O2 + NH4(+)</text>
        <dbReference type="Rhea" id="RHEA:15817"/>
        <dbReference type="ChEBI" id="CHEBI:15377"/>
        <dbReference type="ChEBI" id="CHEBI:15379"/>
        <dbReference type="ChEBI" id="CHEBI:16240"/>
        <dbReference type="ChEBI" id="CHEBI:28938"/>
        <dbReference type="ChEBI" id="CHEBI:58451"/>
        <dbReference type="ChEBI" id="CHEBI:597326"/>
        <dbReference type="EC" id="1.4.3.5"/>
    </reaction>
</comment>
<comment type="catalytic activity">
    <reaction evidence="1">
        <text>pyridoxine 5'-phosphate + O2 = pyridoxal 5'-phosphate + H2O2</text>
        <dbReference type="Rhea" id="RHEA:15149"/>
        <dbReference type="ChEBI" id="CHEBI:15379"/>
        <dbReference type="ChEBI" id="CHEBI:16240"/>
        <dbReference type="ChEBI" id="CHEBI:58589"/>
        <dbReference type="ChEBI" id="CHEBI:597326"/>
        <dbReference type="EC" id="1.4.3.5"/>
    </reaction>
</comment>
<comment type="cofactor">
    <cofactor evidence="1">
        <name>FMN</name>
        <dbReference type="ChEBI" id="CHEBI:58210"/>
    </cofactor>
    <text evidence="1">Binds 1 FMN per subunit.</text>
</comment>
<comment type="pathway">
    <text evidence="1">Cofactor metabolism; pyridoxal 5'-phosphate salvage; pyridoxal 5'-phosphate from pyridoxamine 5'-phosphate: step 1/1.</text>
</comment>
<comment type="pathway">
    <text evidence="1">Cofactor metabolism; pyridoxal 5'-phosphate salvage; pyridoxal 5'-phosphate from pyridoxine 5'-phosphate: step 1/1.</text>
</comment>
<comment type="subunit">
    <text evidence="1">Homodimer.</text>
</comment>
<comment type="similarity">
    <text evidence="1">Belongs to the pyridoxamine 5'-phosphate oxidase family.</text>
</comment>
<comment type="sequence caution" evidence="2">
    <conflict type="erroneous initiation">
        <sequence resource="EMBL-CDS" id="ABC36690"/>
    </conflict>
</comment>
<proteinExistence type="inferred from homology"/>
<feature type="chain" id="PRO_0000255860" description="Pyridoxine/pyridoxamine 5'-phosphate oxidase">
    <location>
        <begin position="1"/>
        <end position="214"/>
    </location>
</feature>
<feature type="binding site" evidence="1">
    <location>
        <begin position="8"/>
        <end position="11"/>
    </location>
    <ligand>
        <name>substrate</name>
    </ligand>
</feature>
<feature type="binding site" evidence="1">
    <location>
        <begin position="61"/>
        <end position="66"/>
    </location>
    <ligand>
        <name>FMN</name>
        <dbReference type="ChEBI" id="CHEBI:58210"/>
    </ligand>
</feature>
<feature type="binding site" evidence="1">
    <location>
        <position position="66"/>
    </location>
    <ligand>
        <name>substrate</name>
    </ligand>
</feature>
<feature type="binding site" evidence="1">
    <location>
        <begin position="76"/>
        <end position="77"/>
    </location>
    <ligand>
        <name>FMN</name>
        <dbReference type="ChEBI" id="CHEBI:58210"/>
    </ligand>
</feature>
<feature type="binding site" evidence="1">
    <location>
        <position position="82"/>
    </location>
    <ligand>
        <name>FMN</name>
        <dbReference type="ChEBI" id="CHEBI:58210"/>
    </ligand>
</feature>
<feature type="binding site" evidence="1">
    <location>
        <position position="83"/>
    </location>
    <ligand>
        <name>FMN</name>
        <dbReference type="ChEBI" id="CHEBI:58210"/>
    </ligand>
</feature>
<feature type="binding site" evidence="1">
    <location>
        <position position="105"/>
    </location>
    <ligand>
        <name>FMN</name>
        <dbReference type="ChEBI" id="CHEBI:58210"/>
    </ligand>
</feature>
<feature type="binding site" evidence="1">
    <location>
        <position position="123"/>
    </location>
    <ligand>
        <name>substrate</name>
    </ligand>
</feature>
<feature type="binding site" evidence="1">
    <location>
        <position position="127"/>
    </location>
    <ligand>
        <name>substrate</name>
    </ligand>
</feature>
<feature type="binding site" evidence="1">
    <location>
        <position position="131"/>
    </location>
    <ligand>
        <name>substrate</name>
    </ligand>
</feature>
<feature type="binding site" evidence="1">
    <location>
        <begin position="140"/>
        <end position="141"/>
    </location>
    <ligand>
        <name>FMN</name>
        <dbReference type="ChEBI" id="CHEBI:58210"/>
    </ligand>
</feature>
<feature type="binding site" evidence="1">
    <location>
        <position position="184"/>
    </location>
    <ligand>
        <name>FMN</name>
        <dbReference type="ChEBI" id="CHEBI:58210"/>
    </ligand>
</feature>
<feature type="binding site" evidence="1">
    <location>
        <begin position="190"/>
        <end position="192"/>
    </location>
    <ligand>
        <name>substrate</name>
    </ligand>
</feature>
<feature type="binding site" evidence="1">
    <location>
        <position position="194"/>
    </location>
    <ligand>
        <name>FMN</name>
        <dbReference type="ChEBI" id="CHEBI:58210"/>
    </ligand>
</feature>
<evidence type="ECO:0000255" key="1">
    <source>
        <dbReference type="HAMAP-Rule" id="MF_01629"/>
    </source>
</evidence>
<evidence type="ECO:0000305" key="2"/>
<sequence>MTTLADLRTNYSRASLDAADVNPNPFVQFDVWFKEALSAQLPEPNTMTLATVDEAGRPSARIVLIKGVDERGFVFFTNYESRKGRELAHNPNAALLFYWIELERQVRIEGRIEKTTEEESDRYFASRPLGSRIGAWASEQSAVIESRALLEAREKEISARFGENPPRPPHWGGYRLVPSTIEFWQGRPSRLHDRLLYTRDAASASGWRIARLAP</sequence>
<keyword id="KW-0285">Flavoprotein</keyword>
<keyword id="KW-0288">FMN</keyword>
<keyword id="KW-0560">Oxidoreductase</keyword>
<keyword id="KW-0664">Pyridoxine biosynthesis</keyword>
<reference key="1">
    <citation type="journal article" date="2005" name="BMC Genomics">
        <title>Bacterial genome adaptation to niches: divergence of the potential virulence genes in three Burkholderia species of different survival strategies.</title>
        <authorList>
            <person name="Kim H.S."/>
            <person name="Schell M.A."/>
            <person name="Yu Y."/>
            <person name="Ulrich R.L."/>
            <person name="Sarria S.H."/>
            <person name="Nierman W.C."/>
            <person name="DeShazer D."/>
        </authorList>
    </citation>
    <scope>NUCLEOTIDE SEQUENCE [LARGE SCALE GENOMIC DNA]</scope>
    <source>
        <strain>ATCC 700388 / DSM 13276 / CCUG 48851 / CIP 106301 / E264</strain>
    </source>
</reference>
<organism>
    <name type="scientific">Burkholderia thailandensis (strain ATCC 700388 / DSM 13276 / CCUG 48851 / CIP 106301 / E264)</name>
    <dbReference type="NCBI Taxonomy" id="271848"/>
    <lineage>
        <taxon>Bacteria</taxon>
        <taxon>Pseudomonadati</taxon>
        <taxon>Pseudomonadota</taxon>
        <taxon>Betaproteobacteria</taxon>
        <taxon>Burkholderiales</taxon>
        <taxon>Burkholderiaceae</taxon>
        <taxon>Burkholderia</taxon>
        <taxon>pseudomallei group</taxon>
    </lineage>
</organism>
<accession>Q2T0M6</accession>
<name>PDXH_BURTA</name>
<gene>
    <name evidence="1" type="primary">pdxH</name>
    <name type="ordered locus">BTH_I0717</name>
</gene>